<reference key="1">
    <citation type="journal article" date="2011" name="PLoS Genet.">
        <title>Genome sequencing and comparative transcriptomics of the model entomopathogenic fungi Metarhizium anisopliae and M. acridum.</title>
        <authorList>
            <person name="Gao Q."/>
            <person name="Jin K."/>
            <person name="Ying S.-H."/>
            <person name="Zhang Y."/>
            <person name="Xiao G."/>
            <person name="Shang Y."/>
            <person name="Duan Z."/>
            <person name="Hu X."/>
            <person name="Xie X.-Q."/>
            <person name="Zhou G."/>
            <person name="Peng G."/>
            <person name="Luo Z."/>
            <person name="Huang W."/>
            <person name="Wang B."/>
            <person name="Fang W."/>
            <person name="Wang S."/>
            <person name="Zhong Y."/>
            <person name="Ma L.-J."/>
            <person name="St Leger R.J."/>
            <person name="Zhao G.-P."/>
            <person name="Pei Y."/>
            <person name="Feng M.-G."/>
            <person name="Xia Y."/>
            <person name="Wang C."/>
        </authorList>
    </citation>
    <scope>NUCLEOTIDE SEQUENCE [LARGE SCALE GENOMIC DNA]</scope>
    <source>
        <strain>ARSEF 23 / ATCC MYA-3075</strain>
    </source>
</reference>
<reference key="2">
    <citation type="journal article" date="2014" name="Proc. Natl. Acad. Sci. U.S.A.">
        <title>Trajectory and genomic determinants of fungal-pathogen speciation and host adaptation.</title>
        <authorList>
            <person name="Hu X."/>
            <person name="Xiao G."/>
            <person name="Zheng P."/>
            <person name="Shang Y."/>
            <person name="Su Y."/>
            <person name="Zhang X."/>
            <person name="Liu X."/>
            <person name="Zhan S."/>
            <person name="St Leger R.J."/>
            <person name="Wang C."/>
        </authorList>
    </citation>
    <scope>GENOME REANNOTATION</scope>
    <source>
        <strain>ARSEF 23 / ATCC MYA-3075</strain>
    </source>
</reference>
<reference key="3">
    <citation type="journal article" date="2023" name="J. Invertebr. Pathol.">
        <title>Only one of three hydrophobins (Hyd1-3) contributes to conidial hydrophobicity and insect pathogenicity of Metarhizium robertsii.</title>
        <authorList>
            <person name="Zhang J.G."/>
            <person name="Xu S.Y."/>
            <person name="Ying S.H."/>
            <person name="Feng M.G."/>
        </authorList>
    </citation>
    <scope>FUNCTION</scope>
    <scope>DISRUPTION PHENOTYPE</scope>
</reference>
<evidence type="ECO:0000250" key="1">
    <source>
        <dbReference type="UniProtKB" id="Q04571"/>
    </source>
</evidence>
<evidence type="ECO:0000255" key="2"/>
<evidence type="ECO:0000269" key="3">
    <source>
    </source>
</evidence>
<evidence type="ECO:0000303" key="4">
    <source>
    </source>
</evidence>
<evidence type="ECO:0000303" key="5">
    <source>
    </source>
</evidence>
<evidence type="ECO:0000305" key="6"/>
<evidence type="ECO:0000305" key="7">
    <source>
    </source>
</evidence>
<gene>
    <name evidence="5" type="primary">hyd2</name>
    <name type="ORF">MAA_09731</name>
</gene>
<organism>
    <name type="scientific">Metarhizium robertsii (strain ARSEF 23 / ATCC MYA-3075)</name>
    <name type="common">Metarhizium anisopliae (strain ARSEF 23)</name>
    <dbReference type="NCBI Taxonomy" id="655844"/>
    <lineage>
        <taxon>Eukaryota</taxon>
        <taxon>Fungi</taxon>
        <taxon>Dikarya</taxon>
        <taxon>Ascomycota</taxon>
        <taxon>Pezizomycotina</taxon>
        <taxon>Sordariomycetes</taxon>
        <taxon>Hypocreomycetidae</taxon>
        <taxon>Hypocreales</taxon>
        <taxon>Clavicipitaceae</taxon>
        <taxon>Metarhizium</taxon>
    </lineage>
</organism>
<keyword id="KW-0134">Cell wall</keyword>
<keyword id="KW-1015">Disulfide bond</keyword>
<keyword id="KW-0964">Secreted</keyword>
<keyword id="KW-0732">Signal</keyword>
<feature type="signal peptide" evidence="2">
    <location>
        <begin position="1"/>
        <end position="15"/>
    </location>
</feature>
<feature type="chain" id="PRO_5012429362" description="Class I hydrophobin 2">
    <location>
        <begin position="16"/>
        <end position="96"/>
    </location>
</feature>
<feature type="disulfide bond" evidence="1">
    <location>
        <begin position="28"/>
        <end position="77"/>
    </location>
</feature>
<feature type="disulfide bond" evidence="1">
    <location>
        <begin position="34"/>
        <end position="71"/>
    </location>
</feature>
<feature type="disulfide bond" evidence="1">
    <location>
        <begin position="35"/>
        <end position="55"/>
    </location>
</feature>
<feature type="disulfide bond" evidence="1">
    <location>
        <begin position="78"/>
        <end position="91"/>
    </location>
</feature>
<protein>
    <recommendedName>
        <fullName evidence="4">Class I hydrophobin 2</fullName>
    </recommendedName>
</protein>
<comment type="function">
    <text evidence="3 7">Aerial growth, conidiation, and dispersal of filamentous fungi in the environment rely upon a capability of their secreting small amphipathic proteins called hydrophobins (HPBs) with low sequence identity. Class I can self-assemble into an outermost layer of rodlet bundles on aerial cell surfaces, conferring cellular hydrophobicity that supports fungal growth, development and dispersal; whereas Class II form highly ordered films at water-air interfaces through intermolecular interactions but contribute nothing to the rodlet structure (Probable). Hyd2 plays a neglectable role in hyphal growth and asexual development and does not seem involved in cellular hydrophobicity, conidial adhesion, stress tolerance nor insect pathogenicity (PubMed:37844657).</text>
</comment>
<comment type="subcellular location">
    <subcellularLocation>
        <location evidence="7">Secreted</location>
    </subcellularLocation>
    <subcellularLocation>
        <location evidence="7">Secreted</location>
        <location evidence="7">Cell wall</location>
    </subcellularLocation>
</comment>
<comment type="disruption phenotype">
    <text evidence="3">Does not affect conidial rodlet bundles, conidial hydrophobicity, adhesion to insect cuticle, insect pathogenicity, UVB resistance nor heat tolerance.</text>
</comment>
<comment type="similarity">
    <text evidence="6">Belongs to the fungal hydrophobin family.</text>
</comment>
<dbReference type="EMBL" id="ADNJ02000009">
    <property type="protein sequence ID" value="EFY94798.1"/>
    <property type="molecule type" value="Genomic_DNA"/>
</dbReference>
<dbReference type="RefSeq" id="XP_007825920.1">
    <property type="nucleotide sequence ID" value="XM_007827729.1"/>
</dbReference>
<dbReference type="SMR" id="E9FBT2"/>
<dbReference type="GeneID" id="19264017"/>
<dbReference type="KEGG" id="maj:MAA_09731"/>
<dbReference type="HOGENOM" id="CLU_105134_3_3_1"/>
<dbReference type="OrthoDB" id="4225815at2759"/>
<dbReference type="Proteomes" id="UP000002498">
    <property type="component" value="Unassembled WGS sequence"/>
</dbReference>
<dbReference type="GO" id="GO:0005576">
    <property type="term" value="C:extracellular region"/>
    <property type="evidence" value="ECO:0007669"/>
    <property type="project" value="UniProtKB-KW"/>
</dbReference>
<dbReference type="GO" id="GO:0009277">
    <property type="term" value="C:fungal-type cell wall"/>
    <property type="evidence" value="ECO:0007669"/>
    <property type="project" value="InterPro"/>
</dbReference>
<dbReference type="GO" id="GO:0005199">
    <property type="term" value="F:structural constituent of cell wall"/>
    <property type="evidence" value="ECO:0007669"/>
    <property type="project" value="InterPro"/>
</dbReference>
<dbReference type="CDD" id="cd23507">
    <property type="entry name" value="hydrophobin_I"/>
    <property type="match status" value="1"/>
</dbReference>
<dbReference type="InterPro" id="IPR001338">
    <property type="entry name" value="Hydrophobin"/>
</dbReference>
<dbReference type="InterPro" id="IPR019778">
    <property type="entry name" value="Hydrophobin_CS"/>
</dbReference>
<dbReference type="Pfam" id="PF01185">
    <property type="entry name" value="Hydrophobin"/>
    <property type="match status" value="1"/>
</dbReference>
<dbReference type="SMART" id="SM00075">
    <property type="entry name" value="HYDRO"/>
    <property type="match status" value="1"/>
</dbReference>
<dbReference type="PROSITE" id="PS00956">
    <property type="entry name" value="HYDROPHOBIN"/>
    <property type="match status" value="1"/>
</dbReference>
<proteinExistence type="inferred from homology"/>
<sequence length="96" mass="9920">MFKALIVALAAVAAAIPTQQPSSNEMNCDSGVYCCNKVAQNTGIVVPIDALSSTCGDTLKLVTVDALNDKCTSQTVCCNNVQQNGLVNVACTPIDV</sequence>
<accession>E9FBT2</accession>
<name>HYD2_METRA</name>